<reference key="1">
    <citation type="journal article" date="2007" name="PLoS Genet.">
        <title>Patterns and implications of gene gain and loss in the evolution of Prochlorococcus.</title>
        <authorList>
            <person name="Kettler G.C."/>
            <person name="Martiny A.C."/>
            <person name="Huang K."/>
            <person name="Zucker J."/>
            <person name="Coleman M.L."/>
            <person name="Rodrigue S."/>
            <person name="Chen F."/>
            <person name="Lapidus A."/>
            <person name="Ferriera S."/>
            <person name="Johnson J."/>
            <person name="Steglich C."/>
            <person name="Church G.M."/>
            <person name="Richardson P."/>
            <person name="Chisholm S.W."/>
        </authorList>
    </citation>
    <scope>NUCLEOTIDE SEQUENCE [LARGE SCALE GENOMIC DNA]</scope>
    <source>
        <strain>NATL2A</strain>
    </source>
</reference>
<evidence type="ECO:0000255" key="1">
    <source>
        <dbReference type="HAMAP-Rule" id="MF_01197"/>
    </source>
</evidence>
<evidence type="ECO:0000256" key="2">
    <source>
        <dbReference type="SAM" id="MobiDB-lite"/>
    </source>
</evidence>
<sequence>MSLISRLRAVVAGDDFLDSDFDELDYETSDDFENFNRGKKEGSTEMATISQANPFDGRSGFPPSNVIGMPGISTNDSEVSLMEPRSFDEMPRVIQALRERKTVILNLTMMEPDQAQRAVDFVAGGTFAIDGHQERVGESIFLFAPSCVTVTNSFQEEASPSNMSNKGNDLISKETSPAPEPAWGETVATAL</sequence>
<protein>
    <recommendedName>
        <fullName evidence="1">Cell division protein SepF</fullName>
    </recommendedName>
</protein>
<dbReference type="EMBL" id="CP000095">
    <property type="protein sequence ID" value="AAZ59218.1"/>
    <property type="molecule type" value="Genomic_DNA"/>
</dbReference>
<dbReference type="RefSeq" id="WP_011294363.1">
    <property type="nucleotide sequence ID" value="NC_007335.2"/>
</dbReference>
<dbReference type="SMR" id="Q46H16"/>
<dbReference type="STRING" id="59920.PMN2A_1730"/>
<dbReference type="KEGG" id="pmn:PMN2A_1730"/>
<dbReference type="HOGENOM" id="CLU_078499_1_0_3"/>
<dbReference type="OrthoDB" id="9815206at2"/>
<dbReference type="PhylomeDB" id="Q46H16"/>
<dbReference type="Proteomes" id="UP000002535">
    <property type="component" value="Chromosome"/>
</dbReference>
<dbReference type="GO" id="GO:0005737">
    <property type="term" value="C:cytoplasm"/>
    <property type="evidence" value="ECO:0007669"/>
    <property type="project" value="UniProtKB-SubCell"/>
</dbReference>
<dbReference type="GO" id="GO:0000917">
    <property type="term" value="P:division septum assembly"/>
    <property type="evidence" value="ECO:0007669"/>
    <property type="project" value="UniProtKB-KW"/>
</dbReference>
<dbReference type="GO" id="GO:0043093">
    <property type="term" value="P:FtsZ-dependent cytokinesis"/>
    <property type="evidence" value="ECO:0007669"/>
    <property type="project" value="UniProtKB-UniRule"/>
</dbReference>
<dbReference type="Gene3D" id="3.30.110.150">
    <property type="entry name" value="SepF-like protein"/>
    <property type="match status" value="1"/>
</dbReference>
<dbReference type="HAMAP" id="MF_01197">
    <property type="entry name" value="SepF"/>
    <property type="match status" value="1"/>
</dbReference>
<dbReference type="InterPro" id="IPR023052">
    <property type="entry name" value="Cell_div_SepF"/>
</dbReference>
<dbReference type="InterPro" id="IPR007561">
    <property type="entry name" value="Cell_div_SepF/SepF-rel"/>
</dbReference>
<dbReference type="InterPro" id="IPR038594">
    <property type="entry name" value="SepF-like_sf"/>
</dbReference>
<dbReference type="PANTHER" id="PTHR35798">
    <property type="entry name" value="CELL DIVISION PROTEIN SEPF"/>
    <property type="match status" value="1"/>
</dbReference>
<dbReference type="PANTHER" id="PTHR35798:SF1">
    <property type="entry name" value="CELL DIVISION PROTEIN SEPF"/>
    <property type="match status" value="1"/>
</dbReference>
<dbReference type="Pfam" id="PF04472">
    <property type="entry name" value="SepF"/>
    <property type="match status" value="1"/>
</dbReference>
<keyword id="KW-0131">Cell cycle</keyword>
<keyword id="KW-0132">Cell division</keyword>
<keyword id="KW-0963">Cytoplasm</keyword>
<keyword id="KW-1185">Reference proteome</keyword>
<keyword id="KW-0717">Septation</keyword>
<accession>Q46H16</accession>
<proteinExistence type="inferred from homology"/>
<comment type="function">
    <text evidence="1">Cell division protein that is part of the divisome complex and is recruited early to the Z-ring. Probably stimulates Z-ring formation, perhaps through the cross-linking of FtsZ protofilaments. Its function overlaps with FtsA.</text>
</comment>
<comment type="subunit">
    <text evidence="1">Homodimer. Interacts with FtsZ.</text>
</comment>
<comment type="subcellular location">
    <subcellularLocation>
        <location evidence="1">Cytoplasm</location>
    </subcellularLocation>
    <text evidence="1">Localizes to the division site, in a FtsZ-dependent manner.</text>
</comment>
<comment type="similarity">
    <text evidence="1">Belongs to the SepF family.</text>
</comment>
<gene>
    <name evidence="1" type="primary">sepF</name>
    <name type="ordered locus">PMN2A_1730</name>
</gene>
<organism>
    <name type="scientific">Prochlorococcus marinus (strain NATL2A)</name>
    <dbReference type="NCBI Taxonomy" id="59920"/>
    <lineage>
        <taxon>Bacteria</taxon>
        <taxon>Bacillati</taxon>
        <taxon>Cyanobacteriota</taxon>
        <taxon>Cyanophyceae</taxon>
        <taxon>Synechococcales</taxon>
        <taxon>Prochlorococcaceae</taxon>
        <taxon>Prochlorococcus</taxon>
    </lineage>
</organism>
<name>SEPF_PROMT</name>
<feature type="chain" id="PRO_0000334065" description="Cell division protein SepF">
    <location>
        <begin position="1"/>
        <end position="191"/>
    </location>
</feature>
<feature type="region of interest" description="Disordered" evidence="2">
    <location>
        <begin position="156"/>
        <end position="191"/>
    </location>
</feature>
<feature type="compositionally biased region" description="Polar residues" evidence="2">
    <location>
        <begin position="156"/>
        <end position="167"/>
    </location>
</feature>